<feature type="chain" id="PRO_0000172171" description="Putative pre-16S rRNA nuclease">
    <location>
        <begin position="1"/>
        <end position="141"/>
    </location>
</feature>
<gene>
    <name type="ordered locus">VP2613</name>
</gene>
<keyword id="KW-0963">Cytoplasm</keyword>
<keyword id="KW-0378">Hydrolase</keyword>
<keyword id="KW-0540">Nuclease</keyword>
<keyword id="KW-0690">Ribosome biogenesis</keyword>
<protein>
    <recommendedName>
        <fullName evidence="1">Putative pre-16S rRNA nuclease</fullName>
        <ecNumber evidence="1">3.1.-.-</ecNumber>
    </recommendedName>
</protein>
<sequence>MSRTIMAFDFGTKSIGSAIGQEITGTASPLKAFKANDGIPNWDDIEKQIKEWQPDLLVVGLPTDLHGKDLETITPRAKKFAKRLQGRYGLPVELHDERLSTSEARAELFSMGGYKALSKGNIDCQSAVVILESWFEALWGE</sequence>
<reference key="1">
    <citation type="journal article" date="2003" name="Lancet">
        <title>Genome sequence of Vibrio parahaemolyticus: a pathogenic mechanism distinct from that of V. cholerae.</title>
        <authorList>
            <person name="Makino K."/>
            <person name="Oshima K."/>
            <person name="Kurokawa K."/>
            <person name="Yokoyama K."/>
            <person name="Uda T."/>
            <person name="Tagomori K."/>
            <person name="Iijima Y."/>
            <person name="Najima M."/>
            <person name="Nakano M."/>
            <person name="Yamashita A."/>
            <person name="Kubota Y."/>
            <person name="Kimura S."/>
            <person name="Yasunaga T."/>
            <person name="Honda T."/>
            <person name="Shinagawa H."/>
            <person name="Hattori M."/>
            <person name="Iida T."/>
        </authorList>
    </citation>
    <scope>NUCLEOTIDE SEQUENCE [LARGE SCALE GENOMIC DNA]</scope>
    <source>
        <strain>RIMD 2210633</strain>
    </source>
</reference>
<name>YQGF_VIBPA</name>
<proteinExistence type="inferred from homology"/>
<evidence type="ECO:0000255" key="1">
    <source>
        <dbReference type="HAMAP-Rule" id="MF_00651"/>
    </source>
</evidence>
<organism>
    <name type="scientific">Vibrio parahaemolyticus serotype O3:K6 (strain RIMD 2210633)</name>
    <dbReference type="NCBI Taxonomy" id="223926"/>
    <lineage>
        <taxon>Bacteria</taxon>
        <taxon>Pseudomonadati</taxon>
        <taxon>Pseudomonadota</taxon>
        <taxon>Gammaproteobacteria</taxon>
        <taxon>Vibrionales</taxon>
        <taxon>Vibrionaceae</taxon>
        <taxon>Vibrio</taxon>
    </lineage>
</organism>
<dbReference type="EC" id="3.1.-.-" evidence="1"/>
<dbReference type="EMBL" id="BA000031">
    <property type="protein sequence ID" value="BAC60876.1"/>
    <property type="molecule type" value="Genomic_DNA"/>
</dbReference>
<dbReference type="RefSeq" id="NP_798992.1">
    <property type="nucleotide sequence ID" value="NC_004603.1"/>
</dbReference>
<dbReference type="SMR" id="Q87LJ9"/>
<dbReference type="GeneID" id="1190137"/>
<dbReference type="KEGG" id="vpa:VP2613"/>
<dbReference type="PATRIC" id="fig|223926.6.peg.2509"/>
<dbReference type="eggNOG" id="COG0816">
    <property type="taxonomic scope" value="Bacteria"/>
</dbReference>
<dbReference type="HOGENOM" id="CLU_098240_3_0_6"/>
<dbReference type="Proteomes" id="UP000002493">
    <property type="component" value="Chromosome 1"/>
</dbReference>
<dbReference type="GO" id="GO:0005829">
    <property type="term" value="C:cytosol"/>
    <property type="evidence" value="ECO:0007669"/>
    <property type="project" value="TreeGrafter"/>
</dbReference>
<dbReference type="GO" id="GO:0004518">
    <property type="term" value="F:nuclease activity"/>
    <property type="evidence" value="ECO:0007669"/>
    <property type="project" value="UniProtKB-KW"/>
</dbReference>
<dbReference type="GO" id="GO:0000967">
    <property type="term" value="P:rRNA 5'-end processing"/>
    <property type="evidence" value="ECO:0007669"/>
    <property type="project" value="UniProtKB-UniRule"/>
</dbReference>
<dbReference type="CDD" id="cd16964">
    <property type="entry name" value="YqgF"/>
    <property type="match status" value="1"/>
</dbReference>
<dbReference type="FunFam" id="3.30.420.140:FF:000002">
    <property type="entry name" value="Putative pre-16S rRNA nuclease"/>
    <property type="match status" value="1"/>
</dbReference>
<dbReference type="Gene3D" id="3.30.420.140">
    <property type="entry name" value="YqgF/RNase H-like domain"/>
    <property type="match status" value="1"/>
</dbReference>
<dbReference type="HAMAP" id="MF_00651">
    <property type="entry name" value="Nuclease_YqgF"/>
    <property type="match status" value="1"/>
</dbReference>
<dbReference type="InterPro" id="IPR012337">
    <property type="entry name" value="RNaseH-like_sf"/>
</dbReference>
<dbReference type="InterPro" id="IPR005227">
    <property type="entry name" value="YqgF"/>
</dbReference>
<dbReference type="InterPro" id="IPR006641">
    <property type="entry name" value="YqgF/RNaseH-like_dom"/>
</dbReference>
<dbReference type="InterPro" id="IPR037027">
    <property type="entry name" value="YqgF/RNaseH-like_dom_sf"/>
</dbReference>
<dbReference type="NCBIfam" id="TIGR00250">
    <property type="entry name" value="RNAse_H_YqgF"/>
    <property type="match status" value="1"/>
</dbReference>
<dbReference type="PANTHER" id="PTHR33317">
    <property type="entry name" value="POLYNUCLEOTIDYL TRANSFERASE, RIBONUCLEASE H-LIKE SUPERFAMILY PROTEIN"/>
    <property type="match status" value="1"/>
</dbReference>
<dbReference type="PANTHER" id="PTHR33317:SF4">
    <property type="entry name" value="POLYNUCLEOTIDYL TRANSFERASE, RIBONUCLEASE H-LIKE SUPERFAMILY PROTEIN"/>
    <property type="match status" value="1"/>
</dbReference>
<dbReference type="Pfam" id="PF03652">
    <property type="entry name" value="RuvX"/>
    <property type="match status" value="1"/>
</dbReference>
<dbReference type="SMART" id="SM00732">
    <property type="entry name" value="YqgFc"/>
    <property type="match status" value="1"/>
</dbReference>
<dbReference type="SUPFAM" id="SSF53098">
    <property type="entry name" value="Ribonuclease H-like"/>
    <property type="match status" value="1"/>
</dbReference>
<accession>Q87LJ9</accession>
<comment type="function">
    <text evidence="1">Could be a nuclease involved in processing of the 5'-end of pre-16S rRNA.</text>
</comment>
<comment type="subcellular location">
    <subcellularLocation>
        <location evidence="1">Cytoplasm</location>
    </subcellularLocation>
</comment>
<comment type="similarity">
    <text evidence="1">Belongs to the YqgF nuclease family.</text>
</comment>